<proteinExistence type="inferred from homology"/>
<keyword id="KW-0963">Cytoplasm</keyword>
<keyword id="KW-0521">NADP</keyword>
<keyword id="KW-0560">Oxidoreductase</keyword>
<keyword id="KW-0671">Queuosine biosynthesis</keyword>
<name>QUEF_COLP3</name>
<gene>
    <name evidence="1" type="primary">queF</name>
    <name type="ordered locus">CPS_3533</name>
</gene>
<feature type="chain" id="PRO_0000163027" description="NADPH-dependent 7-cyano-7-deazaguanine reductase">
    <location>
        <begin position="1"/>
        <end position="286"/>
    </location>
</feature>
<feature type="active site" description="Thioimide intermediate" evidence="1">
    <location>
        <position position="194"/>
    </location>
</feature>
<feature type="active site" description="Proton donor" evidence="1">
    <location>
        <position position="201"/>
    </location>
</feature>
<feature type="binding site" evidence="1">
    <location>
        <begin position="88"/>
        <end position="90"/>
    </location>
    <ligand>
        <name>substrate</name>
    </ligand>
</feature>
<feature type="binding site" evidence="1">
    <location>
        <begin position="90"/>
        <end position="91"/>
    </location>
    <ligand>
        <name>NADPH</name>
        <dbReference type="ChEBI" id="CHEBI:57783"/>
    </ligand>
</feature>
<feature type="binding site" evidence="1">
    <location>
        <begin position="233"/>
        <end position="234"/>
    </location>
    <ligand>
        <name>substrate</name>
    </ligand>
</feature>
<feature type="binding site" evidence="1">
    <location>
        <begin position="262"/>
        <end position="263"/>
    </location>
    <ligand>
        <name>NADPH</name>
        <dbReference type="ChEBI" id="CHEBI:57783"/>
    </ligand>
</feature>
<evidence type="ECO:0000255" key="1">
    <source>
        <dbReference type="HAMAP-Rule" id="MF_00817"/>
    </source>
</evidence>
<organism>
    <name type="scientific">Colwellia psychrerythraea (strain 34H / ATCC BAA-681)</name>
    <name type="common">Vibrio psychroerythus</name>
    <dbReference type="NCBI Taxonomy" id="167879"/>
    <lineage>
        <taxon>Bacteria</taxon>
        <taxon>Pseudomonadati</taxon>
        <taxon>Pseudomonadota</taxon>
        <taxon>Gammaproteobacteria</taxon>
        <taxon>Alteromonadales</taxon>
        <taxon>Colwelliaceae</taxon>
        <taxon>Colwellia</taxon>
    </lineage>
</organism>
<sequence>MANYQNATELSKLTLGKSTQYCSEYTADLLQGVPRSLNRDDLALNQSNLPFVGEDVWYGYELSWLNGKGKPVVAVAEFRFACTSDNIVESKSFKLYLNSFNQTRFSSIKDVEKVLTKDLSKIAGSEASVNLFGVDHCPALDIAKKSDKCICIDGEDISIDNYQYDPQLLATAQDERSGSQIEEYLVSHLLKSNCLITNQPDWASIYIHYRGKAIDHSSLLKYLISFRQHNEFHEQCVERIYCDLQQFCQLDELTIFARYTRRGGLDINPFRSSHIEQAPFARTLRQ</sequence>
<dbReference type="EC" id="1.7.1.13" evidence="1"/>
<dbReference type="EMBL" id="CP000083">
    <property type="protein sequence ID" value="AAZ24878.1"/>
    <property type="molecule type" value="Genomic_DNA"/>
</dbReference>
<dbReference type="RefSeq" id="WP_011044293.1">
    <property type="nucleotide sequence ID" value="NC_003910.7"/>
</dbReference>
<dbReference type="SMR" id="Q47YB3"/>
<dbReference type="STRING" id="167879.CPS_3533"/>
<dbReference type="KEGG" id="cps:CPS_3533"/>
<dbReference type="HOGENOM" id="CLU_054738_0_0_6"/>
<dbReference type="UniPathway" id="UPA00392"/>
<dbReference type="Proteomes" id="UP000000547">
    <property type="component" value="Chromosome"/>
</dbReference>
<dbReference type="GO" id="GO:0005737">
    <property type="term" value="C:cytoplasm"/>
    <property type="evidence" value="ECO:0007669"/>
    <property type="project" value="UniProtKB-SubCell"/>
</dbReference>
<dbReference type="GO" id="GO:0033739">
    <property type="term" value="F:preQ1 synthase activity"/>
    <property type="evidence" value="ECO:0007669"/>
    <property type="project" value="UniProtKB-UniRule"/>
</dbReference>
<dbReference type="GO" id="GO:0008616">
    <property type="term" value="P:queuosine biosynthetic process"/>
    <property type="evidence" value="ECO:0007669"/>
    <property type="project" value="UniProtKB-UniRule"/>
</dbReference>
<dbReference type="GO" id="GO:0006400">
    <property type="term" value="P:tRNA modification"/>
    <property type="evidence" value="ECO:0007669"/>
    <property type="project" value="UniProtKB-UniRule"/>
</dbReference>
<dbReference type="Gene3D" id="3.30.1130.10">
    <property type="match status" value="2"/>
</dbReference>
<dbReference type="HAMAP" id="MF_00817">
    <property type="entry name" value="QueF_type2"/>
    <property type="match status" value="1"/>
</dbReference>
<dbReference type="InterPro" id="IPR043133">
    <property type="entry name" value="GTP-CH-I_C/QueF"/>
</dbReference>
<dbReference type="InterPro" id="IPR050084">
    <property type="entry name" value="NADPH_dep_7-cyano-7-deazaG_red"/>
</dbReference>
<dbReference type="InterPro" id="IPR029500">
    <property type="entry name" value="QueF"/>
</dbReference>
<dbReference type="InterPro" id="IPR029139">
    <property type="entry name" value="QueF_N"/>
</dbReference>
<dbReference type="InterPro" id="IPR016428">
    <property type="entry name" value="QueF_type2"/>
</dbReference>
<dbReference type="NCBIfam" id="TIGR03138">
    <property type="entry name" value="QueF"/>
    <property type="match status" value="1"/>
</dbReference>
<dbReference type="PANTHER" id="PTHR34354">
    <property type="entry name" value="NADPH-DEPENDENT 7-CYANO-7-DEAZAGUANINE REDUCTASE"/>
    <property type="match status" value="1"/>
</dbReference>
<dbReference type="PANTHER" id="PTHR34354:SF1">
    <property type="entry name" value="NADPH-DEPENDENT 7-CYANO-7-DEAZAGUANINE REDUCTASE"/>
    <property type="match status" value="1"/>
</dbReference>
<dbReference type="Pfam" id="PF14489">
    <property type="entry name" value="QueF"/>
    <property type="match status" value="1"/>
</dbReference>
<dbReference type="Pfam" id="PF14819">
    <property type="entry name" value="QueF_N"/>
    <property type="match status" value="1"/>
</dbReference>
<dbReference type="PIRSF" id="PIRSF004750">
    <property type="entry name" value="Nitrile_oxidored_YqcD_prd"/>
    <property type="match status" value="1"/>
</dbReference>
<dbReference type="SUPFAM" id="SSF55620">
    <property type="entry name" value="Tetrahydrobiopterin biosynthesis enzymes-like"/>
    <property type="match status" value="1"/>
</dbReference>
<accession>Q47YB3</accession>
<reference key="1">
    <citation type="journal article" date="2005" name="Proc. Natl. Acad. Sci. U.S.A.">
        <title>The psychrophilic lifestyle as revealed by the genome sequence of Colwellia psychrerythraea 34H through genomic and proteomic analyses.</title>
        <authorList>
            <person name="Methe B.A."/>
            <person name="Nelson K.E."/>
            <person name="Deming J.W."/>
            <person name="Momen B."/>
            <person name="Melamud E."/>
            <person name="Zhang X."/>
            <person name="Moult J."/>
            <person name="Madupu R."/>
            <person name="Nelson W.C."/>
            <person name="Dodson R.J."/>
            <person name="Brinkac L.M."/>
            <person name="Daugherty S.C."/>
            <person name="Durkin A.S."/>
            <person name="DeBoy R.T."/>
            <person name="Kolonay J.F."/>
            <person name="Sullivan S.A."/>
            <person name="Zhou L."/>
            <person name="Davidsen T.M."/>
            <person name="Wu M."/>
            <person name="Huston A.L."/>
            <person name="Lewis M."/>
            <person name="Weaver B."/>
            <person name="Weidman J.F."/>
            <person name="Khouri H."/>
            <person name="Utterback T.R."/>
            <person name="Feldblyum T.V."/>
            <person name="Fraser C.M."/>
        </authorList>
    </citation>
    <scope>NUCLEOTIDE SEQUENCE [LARGE SCALE GENOMIC DNA]</scope>
    <source>
        <strain>34H / ATCC BAA-681</strain>
    </source>
</reference>
<protein>
    <recommendedName>
        <fullName evidence="1">NADPH-dependent 7-cyano-7-deazaguanine reductase</fullName>
        <ecNumber evidence="1">1.7.1.13</ecNumber>
    </recommendedName>
    <alternativeName>
        <fullName evidence="1">7-cyano-7-carbaguanine reductase</fullName>
    </alternativeName>
    <alternativeName>
        <fullName evidence="1">NADPH-dependent nitrile oxidoreductase</fullName>
    </alternativeName>
    <alternativeName>
        <fullName evidence="1">PreQ(0) reductase</fullName>
    </alternativeName>
</protein>
<comment type="function">
    <text evidence="1">Catalyzes the NADPH-dependent reduction of 7-cyano-7-deazaguanine (preQ0) to 7-aminomethyl-7-deazaguanine (preQ1).</text>
</comment>
<comment type="catalytic activity">
    <reaction evidence="1">
        <text>7-aminomethyl-7-carbaguanine + 2 NADP(+) = 7-cyano-7-deazaguanine + 2 NADPH + 3 H(+)</text>
        <dbReference type="Rhea" id="RHEA:13409"/>
        <dbReference type="ChEBI" id="CHEBI:15378"/>
        <dbReference type="ChEBI" id="CHEBI:45075"/>
        <dbReference type="ChEBI" id="CHEBI:57783"/>
        <dbReference type="ChEBI" id="CHEBI:58349"/>
        <dbReference type="ChEBI" id="CHEBI:58703"/>
        <dbReference type="EC" id="1.7.1.13"/>
    </reaction>
</comment>
<comment type="pathway">
    <text evidence="1">tRNA modification; tRNA-queuosine biosynthesis.</text>
</comment>
<comment type="subunit">
    <text evidence="1">Homodimer.</text>
</comment>
<comment type="subcellular location">
    <subcellularLocation>
        <location evidence="1">Cytoplasm</location>
    </subcellularLocation>
</comment>
<comment type="similarity">
    <text evidence="1">Belongs to the GTP cyclohydrolase I family. QueF type 2 subfamily.</text>
</comment>